<organism>
    <name type="scientific">Homo sapiens</name>
    <name type="common">Human</name>
    <dbReference type="NCBI Taxonomy" id="9606"/>
    <lineage>
        <taxon>Eukaryota</taxon>
        <taxon>Metazoa</taxon>
        <taxon>Chordata</taxon>
        <taxon>Craniata</taxon>
        <taxon>Vertebrata</taxon>
        <taxon>Euteleostomi</taxon>
        <taxon>Mammalia</taxon>
        <taxon>Eutheria</taxon>
        <taxon>Euarchontoglires</taxon>
        <taxon>Primates</taxon>
        <taxon>Haplorrhini</taxon>
        <taxon>Catarrhini</taxon>
        <taxon>Hominidae</taxon>
        <taxon>Homo</taxon>
    </lineage>
</organism>
<keyword id="KW-1003">Cell membrane</keyword>
<keyword id="KW-0966">Cell projection</keyword>
<keyword id="KW-0157">Chromophore</keyword>
<keyword id="KW-0963">Cytoplasm</keyword>
<keyword id="KW-0225">Disease variant</keyword>
<keyword id="KW-1015">Disulfide bond</keyword>
<keyword id="KW-0297">G-protein coupled receptor</keyword>
<keyword id="KW-0325">Glycoprotein</keyword>
<keyword id="KW-0472">Membrane</keyword>
<keyword id="KW-0597">Phosphoprotein</keyword>
<keyword id="KW-0600">Photoreceptor protein</keyword>
<keyword id="KW-1267">Proteomics identification</keyword>
<keyword id="KW-0675">Receptor</keyword>
<keyword id="KW-1185">Reference proteome</keyword>
<keyword id="KW-0681">Retinal protein</keyword>
<keyword id="KW-0716">Sensory transduction</keyword>
<keyword id="KW-0807">Transducer</keyword>
<keyword id="KW-0812">Transmembrane</keyword>
<keyword id="KW-1133">Transmembrane helix</keyword>
<keyword id="KW-0844">Vision</keyword>
<comment type="function">
    <text evidence="1 13">Visual pigments are the light-absorbing molecules that mediate vision. They consist of an apoprotein, opsin, covalently linked to cis-retinal (Probable). Required for the maintenance of cone outer segment organization in the ventral retina, but not essential for the maintenance of functioning cone photoreceptors (By similarity). Involved in ensuring correct abundance and localization of retinal membrane proteins (By similarity). May increase spectral sensitivity in dim light (By similarity).</text>
</comment>
<comment type="biophysicochemical properties">
    <absorption>
        <max>420 nm</max>
    </absorption>
</comment>
<comment type="interaction">
    <interactant intactId="EBI-13385956">
        <id>P03999</id>
    </interactant>
    <interactant intactId="EBI-11956541">
        <id>Q9GZY8-5</id>
        <label>MFF</label>
    </interactant>
    <organismsDiffer>false</organismsDiffer>
    <experiments>3</experiments>
</comment>
<comment type="subcellular location">
    <subcellularLocation>
        <location evidence="7 9 10">Cell membrane</location>
        <topology evidence="2">Multi-pass membrane protein</topology>
    </subcellularLocation>
    <subcellularLocation>
        <location evidence="1">Photoreceptor inner segment</location>
    </subcellularLocation>
    <subcellularLocation>
        <location evidence="1">Cell projection</location>
        <location evidence="1">Cilium</location>
        <location evidence="1">Photoreceptor outer segment</location>
    </subcellularLocation>
    <subcellularLocation>
        <location evidence="8">Cytoplasm</location>
        <location evidence="8">Perinuclear region</location>
    </subcellularLocation>
</comment>
<comment type="tissue specificity">
    <text evidence="7 8 9 10">The three color pigments are found in the cone photoreceptor cells (PubMed:2937147). Expressed throughout the epidermis and dermis, primarily in the stratum granulosum in the facial and abdominal skin (at protein level) (PubMed:30168605). Expressed in dermal fibroblasts (at protein level) (PubMed:31380578). Expressed in melanocytes (at protein level) (PubMed:31730232).</text>
</comment>
<comment type="induction">
    <text evidence="9">Induced by ultraviolet A light in dermal fibroblasts.</text>
</comment>
<comment type="PTM">
    <text>Phosphorylated on some or all of the serine and threonine residues present in the C-terminal region.</text>
</comment>
<comment type="disease" evidence="4 5 6">
    <disease id="DI-02393">
        <name>Tritan color blindness</name>
        <acronym>CBT</acronym>
        <description>A disorder of vision characterized by a selective deficiency of blue spectral sensitivity.</description>
        <dbReference type="MIM" id="190900"/>
    </disease>
    <text>The disease is caused by variants affecting the gene represented in this entry.</text>
</comment>
<comment type="similarity">
    <text evidence="3">Belongs to the G-protein coupled receptor 1 family. Opsin subfamily.</text>
</comment>
<comment type="sequence caution" evidence="12">
    <conflict type="erroneous initiation">
        <sequence resource="EMBL-CDS" id="AAB05207"/>
    </conflict>
    <text>Extended N-terminus.</text>
</comment>
<comment type="sequence caution" evidence="12">
    <conflict type="erroneous initiation">
        <sequence resource="EMBL-CDS" id="AAC51334"/>
    </conflict>
    <text>Extended N-terminus.</text>
</comment>
<comment type="sequence caution" evidence="12">
    <conflict type="erroneous initiation">
        <sequence resource="EMBL-CDS" id="AAL31362"/>
    </conflict>
    <text>Extended N-terminus.</text>
</comment>
<name>OPSB_HUMAN</name>
<accession>P03999</accession>
<accession>Q13877</accession>
<gene>
    <name type="primary">OPN1SW</name>
    <name type="synonym">BCP</name>
</gene>
<sequence>MSEEEFYLFKNISSVGPWDGPQYHIAPVWAFYLQAAFMGTVFLIGFPLNAMVLVATLRYKKLRQPLNYILVNVSFGGFLLCIFSVFPVFVASCNGYFVFGRHVCALEGFLGTVAGLVTGWSLAFLAFERYIVICKPFGNFRFSSKHALTVVLATWTIGIGVSIPPFFGWSRFIPEGLQCSCGPDWYTVGTKYRSESYTWFLFIFCFIVPLSLICFSYTQLLRALKAVAAQQQESATTQKAEREVSRMVVVMVGSFCVCYVPYAAFAMYMVNNRNHGLDLRLVTIPSFFSKSACIYNPIIYCFMNKQFQACIMKMVCGKAMTDESDTCSSQKTEVSTVSSTQVGPN</sequence>
<protein>
    <recommendedName>
        <fullName>Short-wave-sensitive opsin 1</fullName>
    </recommendedName>
    <alternativeName>
        <fullName>Blue cone photoreceptor pigment</fullName>
    </alternativeName>
    <alternativeName>
        <fullName>Blue-sensitive opsin</fullName>
        <shortName>BOP</shortName>
    </alternativeName>
</protein>
<proteinExistence type="evidence at protein level"/>
<evidence type="ECO:0000250" key="1">
    <source>
        <dbReference type="UniProtKB" id="P51491"/>
    </source>
</evidence>
<evidence type="ECO:0000255" key="2"/>
<evidence type="ECO:0000255" key="3">
    <source>
        <dbReference type="PROSITE-ProRule" id="PRU00521"/>
    </source>
</evidence>
<evidence type="ECO:0000269" key="4">
    <source>
    </source>
</evidence>
<evidence type="ECO:0000269" key="5">
    <source>
    </source>
</evidence>
<evidence type="ECO:0000269" key="6">
    <source>
    </source>
</evidence>
<evidence type="ECO:0000269" key="7">
    <source>
    </source>
</evidence>
<evidence type="ECO:0000269" key="8">
    <source>
    </source>
</evidence>
<evidence type="ECO:0000269" key="9">
    <source>
    </source>
</evidence>
<evidence type="ECO:0000269" key="10">
    <source>
    </source>
</evidence>
<evidence type="ECO:0000269" key="11">
    <source ref="3"/>
</evidence>
<evidence type="ECO:0000305" key="12"/>
<evidence type="ECO:0000305" key="13">
    <source>
    </source>
</evidence>
<reference key="1">
    <citation type="journal article" date="1986" name="Science">
        <title>Molecular genetics of human color vision: the genes encoding blue, green, and red pigments.</title>
        <authorList>
            <person name="Nathans J."/>
            <person name="Thomas D."/>
            <person name="Hogness D.S."/>
        </authorList>
    </citation>
    <scope>NUCLEOTIDE SEQUENCE [GENOMIC DNA]</scope>
    <scope>FUNCTION</scope>
    <scope>SUBCELLULAR LOCATION</scope>
    <scope>TISSUE SPECIFICITY</scope>
    <source>
        <tissue>Retinal cone cell</tissue>
    </source>
</reference>
<reference key="2">
    <citation type="journal article" date="1997" name="J. Mol. Evol.">
        <title>Sequences and evolution of human and squirrel monkey blue opsin genes.</title>
        <authorList>
            <person name="Shimmin L.C."/>
            <person name="Mai P."/>
            <person name="Li W.H."/>
        </authorList>
    </citation>
    <scope>NUCLEOTIDE SEQUENCE [GENOMIC DNA]</scope>
</reference>
<reference key="3">
    <citation type="submission" date="2001-11" db="EMBL/GenBank/DDBJ databases">
        <title>A point mutation in the blue cone opsin gene causes tritanopia in two autosomal dominant tritan pedigrees.</title>
        <authorList>
            <person name="Li T."/>
            <person name="Studencki A."/>
            <person name="Falk J."/>
            <person name="Smith V."/>
            <person name="Pokorny J."/>
            <person name="Went L."/>
            <person name="O'Shea R."/>
            <person name="Applebury M.L."/>
        </authorList>
    </citation>
    <scope>NUCLEOTIDE SEQUENCE [GENOMIC DNA]</scope>
    <scope>VARIANT TRITANOPIA SER-261</scope>
</reference>
<reference key="4">
    <citation type="journal article" date="1989" name="Science">
        <title>Access to a messenger RNA sequence or its protein product is not limited by tissue or species specificity.</title>
        <authorList>
            <person name="Sarkar G."/>
            <person name="Sommer S.S."/>
        </authorList>
    </citation>
    <scope>NUCLEOTIDE SEQUENCE [MRNA] OF 269-307</scope>
</reference>
<reference key="5">
    <citation type="journal article" date="1986" name="Vision Res.">
        <title>Molecular biology of the visual pigments.</title>
        <authorList>
            <person name="Applebury M.L."/>
            <person name="Hargrave P.A."/>
        </authorList>
    </citation>
    <scope>REVIEW</scope>
</reference>
<reference key="6">
    <citation type="journal article" date="2019" name="Lasers. Surg. Med.">
        <title>Does blue light restore human epidermal barrier function via activation of Opsin during cutaneous wound healing?</title>
        <authorList>
            <person name="Castellano-Pellicena I."/>
            <person name="Uzunbajakava N.E."/>
            <person name="Mignon C."/>
            <person name="Raafs B."/>
            <person name="Botchkarev V.A."/>
            <person name="Thornton M.J."/>
        </authorList>
    </citation>
    <scope>SUBCELLULAR LOCATION</scope>
    <scope>TISSUE SPECIFICITY</scope>
</reference>
<reference key="7">
    <citation type="journal article" date="2020" name="Br. J. Dermatol.">
        <title>Opsin 3 is a key regulator of ultraviolet A-induced photoageing in human dermal fibroblast cells.</title>
        <authorList>
            <person name="Lan Y."/>
            <person name="Wang Y."/>
            <person name="Lu H."/>
        </authorList>
    </citation>
    <scope>SUBCELLULAR LOCATION</scope>
    <scope>TISSUE SPECIFICITY</scope>
    <scope>INDUCTION BY ULTRAVIOLET A LIGHT</scope>
</reference>
<reference key="8">
    <citation type="journal article" date="2020" name="Photochem. Photobiol.">
        <title>Opsin3 Downregulation Induces Apoptosis of Human Epidermal Melanocytes via Mitochondrial Pathway.</title>
        <authorList>
            <person name="Wang Y."/>
            <person name="Lan Y."/>
            <person name="Lu H."/>
        </authorList>
    </citation>
    <scope>SUBCELLULAR LOCATION</scope>
    <scope>TISSUE SPECIFICITY</scope>
</reference>
<reference key="9">
    <citation type="journal article" date="1992" name="Am. J. Hum. Genet.">
        <title>Human tritanopia associated with two amino acid substitutions in the blue-sensitive opsin.</title>
        <authorList>
            <person name="Weitz C.J."/>
            <person name="Miyake Y."/>
            <person name="Shinzato K."/>
            <person name="Montag E."/>
            <person name="Zrenner E."/>
            <person name="Went L.N."/>
            <person name="Nathans J."/>
        </authorList>
    </citation>
    <scope>VARIANTS CBT ARG-76 AND PRO-211</scope>
</reference>
<reference key="10">
    <citation type="journal article" date="1992" name="Am. J. Hum. Genet.">
        <title>Human tritanopia associated with a third amino acid substitution in the blue-sensitive visual pigment.</title>
        <authorList>
            <person name="Weitz C.J."/>
            <person name="Went L.N."/>
            <person name="Nathans J."/>
        </authorList>
    </citation>
    <scope>VARIANT CBT SER-261</scope>
</reference>
<reference key="11">
    <citation type="journal article" date="2012" name="Vision Res.">
        <title>Substitution of isoleucine for threonine at position 190 of S-opsin causes S-cone-function abnormalities.</title>
        <authorList>
            <person name="Baraas R.C."/>
            <person name="Hagen L.A."/>
            <person name="Dees E.W."/>
            <person name="Neitz M."/>
        </authorList>
    </citation>
    <scope>VARIANT CBT ILE-187</scope>
</reference>
<feature type="chain" id="PRO_0000197762" description="Short-wave-sensitive opsin 1">
    <location>
        <begin position="1"/>
        <end position="345"/>
    </location>
</feature>
<feature type="topological domain" description="Extracellular" evidence="2">
    <location>
        <begin position="1"/>
        <end position="30"/>
    </location>
</feature>
<feature type="transmembrane region" description="Helical; Name=1" evidence="2">
    <location>
        <begin position="31"/>
        <end position="55"/>
    </location>
</feature>
<feature type="topological domain" description="Cytoplasmic" evidence="2">
    <location>
        <begin position="56"/>
        <end position="67"/>
    </location>
</feature>
<feature type="transmembrane region" description="Helical; Name=2" evidence="2">
    <location>
        <begin position="68"/>
        <end position="93"/>
    </location>
</feature>
<feature type="topological domain" description="Extracellular" evidence="2">
    <location>
        <begin position="94"/>
        <end position="107"/>
    </location>
</feature>
<feature type="transmembrane region" description="Helical; Name=3" evidence="2">
    <location>
        <begin position="108"/>
        <end position="127"/>
    </location>
</feature>
<feature type="topological domain" description="Cytoplasmic" evidence="2">
    <location>
        <begin position="128"/>
        <end position="146"/>
    </location>
</feature>
<feature type="transmembrane region" description="Helical; Name=4" evidence="2">
    <location>
        <begin position="147"/>
        <end position="170"/>
    </location>
</feature>
<feature type="topological domain" description="Extracellular" evidence="2">
    <location>
        <begin position="171"/>
        <end position="196"/>
    </location>
</feature>
<feature type="transmembrane region" description="Helical; Name=5" evidence="2">
    <location>
        <begin position="197"/>
        <end position="224"/>
    </location>
</feature>
<feature type="topological domain" description="Cytoplasmic" evidence="2">
    <location>
        <begin position="225"/>
        <end position="246"/>
    </location>
</feature>
<feature type="transmembrane region" description="Helical; Name=6" evidence="2">
    <location>
        <begin position="247"/>
        <end position="270"/>
    </location>
</feature>
<feature type="topological domain" description="Extracellular" evidence="2">
    <location>
        <begin position="271"/>
        <end position="278"/>
    </location>
</feature>
<feature type="transmembrane region" description="Helical; Name=7" evidence="2">
    <location>
        <begin position="279"/>
        <end position="303"/>
    </location>
</feature>
<feature type="topological domain" description="Cytoplasmic" evidence="2">
    <location>
        <begin position="304"/>
        <end position="345"/>
    </location>
</feature>
<feature type="modified residue" description="N6-(retinylidene)lysine">
    <location>
        <position position="290"/>
    </location>
</feature>
<feature type="glycosylation site" description="N-linked (GlcNAc...) asparagine" evidence="12">
    <location>
        <position position="11"/>
    </location>
</feature>
<feature type="disulfide bond" evidence="3">
    <location>
        <begin position="104"/>
        <end position="181"/>
    </location>
</feature>
<feature type="sequence variant" id="VAR_004838" description="In CBT; dbSNP:rs104894031." evidence="5">
    <original>G</original>
    <variation>R</variation>
    <location>
        <position position="76"/>
    </location>
</feature>
<feature type="sequence variant" id="VAR_081835" description="In CBT; dbSNP:rs1190183515." evidence="6">
    <original>T</original>
    <variation>I</variation>
    <location>
        <position position="187"/>
    </location>
</feature>
<feature type="sequence variant" id="VAR_004839" description="In CBT; dbSNP:rs104894032." evidence="5">
    <original>S</original>
    <variation>P</variation>
    <location>
        <position position="211"/>
    </location>
</feature>
<feature type="sequence variant" id="VAR_004840" description="In CBT; dbSNP:rs104894033." evidence="4 11">
    <original>P</original>
    <variation>S</variation>
    <location>
        <position position="261"/>
    </location>
</feature>
<feature type="sequence conflict" description="In Ref. 4." evidence="12" ref="4">
    <original>KQF</original>
    <variation>VKL</variation>
    <location>
        <begin position="305"/>
        <end position="307"/>
    </location>
</feature>
<dbReference type="EMBL" id="AH003620">
    <property type="protein sequence ID" value="AAB05207.1"/>
    <property type="status" value="ALT_INIT"/>
    <property type="molecule type" value="Genomic_DNA"/>
</dbReference>
<dbReference type="EMBL" id="M13295">
    <property type="protein sequence ID" value="AAB05207.1"/>
    <property type="status" value="JOINED"/>
    <property type="molecule type" value="Genomic_DNA"/>
</dbReference>
<dbReference type="EMBL" id="M13296">
    <property type="protein sequence ID" value="AAB05207.1"/>
    <property type="status" value="JOINED"/>
    <property type="molecule type" value="Genomic_DNA"/>
</dbReference>
<dbReference type="EMBL" id="M13297">
    <property type="protein sequence ID" value="AAB05207.1"/>
    <property type="status" value="JOINED"/>
    <property type="molecule type" value="Genomic_DNA"/>
</dbReference>
<dbReference type="EMBL" id="M13298">
    <property type="protein sequence ID" value="AAB05207.1"/>
    <property type="status" value="JOINED"/>
    <property type="molecule type" value="Genomic_DNA"/>
</dbReference>
<dbReference type="EMBL" id="U53874">
    <property type="protein sequence ID" value="AAC51334.1"/>
    <property type="status" value="ALT_INIT"/>
    <property type="molecule type" value="Genomic_DNA"/>
</dbReference>
<dbReference type="EMBL" id="L32835">
    <property type="protein sequence ID" value="AAL31362.1"/>
    <property type="status" value="ALT_INIT"/>
    <property type="molecule type" value="Genomic_DNA"/>
</dbReference>
<dbReference type="EMBL" id="M26172">
    <property type="protein sequence ID" value="AAA35608.1"/>
    <property type="molecule type" value="mRNA"/>
</dbReference>
<dbReference type="CCDS" id="CCDS5806.2"/>
<dbReference type="PIR" id="A03156">
    <property type="entry name" value="OOHUB"/>
</dbReference>
<dbReference type="RefSeq" id="NP_001372054.1">
    <property type="nucleotide sequence ID" value="NM_001385125.1"/>
</dbReference>
<dbReference type="RefSeq" id="NP_001699.1">
    <property type="nucleotide sequence ID" value="NM_001708.2"/>
</dbReference>
<dbReference type="SMR" id="P03999"/>
<dbReference type="BioGRID" id="107082">
    <property type="interactions" value="7"/>
</dbReference>
<dbReference type="FunCoup" id="P03999">
    <property type="interactions" value="308"/>
</dbReference>
<dbReference type="IntAct" id="P03999">
    <property type="interactions" value="3"/>
</dbReference>
<dbReference type="STRING" id="9606.ENSP00000249389"/>
<dbReference type="GlyCosmos" id="P03999">
    <property type="glycosylation" value="1 site, No reported glycans"/>
</dbReference>
<dbReference type="GlyGen" id="P03999">
    <property type="glycosylation" value="1 site"/>
</dbReference>
<dbReference type="iPTMnet" id="P03999"/>
<dbReference type="PhosphoSitePlus" id="P03999"/>
<dbReference type="BioMuta" id="OPN1SW"/>
<dbReference type="DMDM" id="129203"/>
<dbReference type="MassIVE" id="P03999"/>
<dbReference type="PaxDb" id="9606-ENSP00000249389"/>
<dbReference type="PeptideAtlas" id="P03999"/>
<dbReference type="ProteomicsDB" id="51629"/>
<dbReference type="Antibodypedia" id="31899">
    <property type="antibodies" value="83 antibodies from 19 providers"/>
</dbReference>
<dbReference type="DNASU" id="611"/>
<dbReference type="Ensembl" id="ENST00000249389.3">
    <property type="protein sequence ID" value="ENSP00000249389.3"/>
    <property type="gene ID" value="ENSG00000128617.3"/>
</dbReference>
<dbReference type="GeneID" id="611"/>
<dbReference type="MANE-Select" id="ENST00000249389.3">
    <property type="protein sequence ID" value="ENSP00000249389.3"/>
    <property type="RefSeq nucleotide sequence ID" value="NM_001385125.1"/>
    <property type="RefSeq protein sequence ID" value="NP_001372054.1"/>
</dbReference>
<dbReference type="AGR" id="HGNC:1012"/>
<dbReference type="DisGeNET" id="611"/>
<dbReference type="GeneCards" id="OPN1SW"/>
<dbReference type="HGNC" id="HGNC:1012">
    <property type="gene designation" value="OPN1SW"/>
</dbReference>
<dbReference type="HPA" id="ENSG00000128617">
    <property type="expression patterns" value="Tissue enriched (retina)"/>
</dbReference>
<dbReference type="MalaCards" id="OPN1SW"/>
<dbReference type="MIM" id="190900">
    <property type="type" value="phenotype"/>
</dbReference>
<dbReference type="MIM" id="613522">
    <property type="type" value="gene"/>
</dbReference>
<dbReference type="neXtProt" id="NX_P03999"/>
<dbReference type="OpenTargets" id="ENSG00000128617"/>
<dbReference type="Orphanet" id="88629">
    <property type="disease" value="Tritanopia"/>
</dbReference>
<dbReference type="PharmGKB" id="PA31938"/>
<dbReference type="VEuPathDB" id="HostDB:ENSG00000128617"/>
<dbReference type="eggNOG" id="KOG3656">
    <property type="taxonomic scope" value="Eukaryota"/>
</dbReference>
<dbReference type="GeneTree" id="ENSGT01030000234549"/>
<dbReference type="HOGENOM" id="CLU_009579_3_0_1"/>
<dbReference type="InParanoid" id="P03999"/>
<dbReference type="OrthoDB" id="6142583at2759"/>
<dbReference type="PAN-GO" id="P03999">
    <property type="GO annotations" value="6 GO annotations based on evolutionary models"/>
</dbReference>
<dbReference type="PhylomeDB" id="P03999"/>
<dbReference type="TreeFam" id="TF324998"/>
<dbReference type="PathwayCommons" id="P03999"/>
<dbReference type="Reactome" id="R-HSA-2187335">
    <property type="pathway name" value="The retinoid cycle in cones (daylight vision)"/>
</dbReference>
<dbReference type="Reactome" id="R-HSA-418594">
    <property type="pathway name" value="G alpha (i) signalling events"/>
</dbReference>
<dbReference type="Reactome" id="R-HSA-419771">
    <property type="pathway name" value="Opsins"/>
</dbReference>
<dbReference type="Reactome" id="R-HSA-9918443">
    <property type="pathway name" value="Defective visual phototransduction due to OPN1SW loss of function"/>
</dbReference>
<dbReference type="SignaLink" id="P03999"/>
<dbReference type="BioGRID-ORCS" id="611">
    <property type="hits" value="8 hits in 1145 CRISPR screens"/>
</dbReference>
<dbReference type="GeneWiki" id="OPN1SW"/>
<dbReference type="GenomeRNAi" id="611"/>
<dbReference type="Pharos" id="P03999">
    <property type="development level" value="Tbio"/>
</dbReference>
<dbReference type="PRO" id="PR:P03999"/>
<dbReference type="Proteomes" id="UP000005640">
    <property type="component" value="Chromosome 7"/>
</dbReference>
<dbReference type="RNAct" id="P03999">
    <property type="molecule type" value="protein"/>
</dbReference>
<dbReference type="Bgee" id="ENSG00000128617">
    <property type="expression patterns" value="Expressed in sural nerve and 88 other cell types or tissues"/>
</dbReference>
<dbReference type="GO" id="GO:0120199">
    <property type="term" value="C:cone photoreceptor outer segment"/>
    <property type="evidence" value="ECO:0007669"/>
    <property type="project" value="Ensembl"/>
</dbReference>
<dbReference type="GO" id="GO:0048471">
    <property type="term" value="C:perinuclear region of cytoplasm"/>
    <property type="evidence" value="ECO:0000314"/>
    <property type="project" value="UniProtKB"/>
</dbReference>
<dbReference type="GO" id="GO:0097381">
    <property type="term" value="C:photoreceptor disc membrane"/>
    <property type="evidence" value="ECO:0000304"/>
    <property type="project" value="Reactome"/>
</dbReference>
<dbReference type="GO" id="GO:0001917">
    <property type="term" value="C:photoreceptor inner segment"/>
    <property type="evidence" value="ECO:0007669"/>
    <property type="project" value="UniProtKB-SubCell"/>
</dbReference>
<dbReference type="GO" id="GO:0001750">
    <property type="term" value="C:photoreceptor outer segment"/>
    <property type="evidence" value="ECO:0000318"/>
    <property type="project" value="GO_Central"/>
</dbReference>
<dbReference type="GO" id="GO:0005886">
    <property type="term" value="C:plasma membrane"/>
    <property type="evidence" value="ECO:0000314"/>
    <property type="project" value="UniProtKB"/>
</dbReference>
<dbReference type="GO" id="GO:0008020">
    <property type="term" value="F:G protein-coupled photoreceptor activity"/>
    <property type="evidence" value="ECO:0000318"/>
    <property type="project" value="GO_Central"/>
</dbReference>
<dbReference type="GO" id="GO:0038023">
    <property type="term" value="F:signaling receptor activity"/>
    <property type="evidence" value="ECO:0000304"/>
    <property type="project" value="ProtInc"/>
</dbReference>
<dbReference type="GO" id="GO:0071482">
    <property type="term" value="P:cellular response to light stimulus"/>
    <property type="evidence" value="ECO:0000318"/>
    <property type="project" value="GO_Central"/>
</dbReference>
<dbReference type="GO" id="GO:0071492">
    <property type="term" value="P:cellular response to UV-A"/>
    <property type="evidence" value="ECO:0000314"/>
    <property type="project" value="UniProtKB"/>
</dbReference>
<dbReference type="GO" id="GO:0007186">
    <property type="term" value="P:G protein-coupled receptor signaling pathway"/>
    <property type="evidence" value="ECO:0000318"/>
    <property type="project" value="GO_Central"/>
</dbReference>
<dbReference type="GO" id="GO:0007602">
    <property type="term" value="P:phototransduction"/>
    <property type="evidence" value="ECO:0000318"/>
    <property type="project" value="GO_Central"/>
</dbReference>
<dbReference type="GO" id="GO:0007165">
    <property type="term" value="P:signal transduction"/>
    <property type="evidence" value="ECO:0000304"/>
    <property type="project" value="ProtInc"/>
</dbReference>
<dbReference type="GO" id="GO:0007601">
    <property type="term" value="P:visual perception"/>
    <property type="evidence" value="ECO:0000304"/>
    <property type="project" value="ProtInc"/>
</dbReference>
<dbReference type="CDD" id="cd15076">
    <property type="entry name" value="7tmA_SWS1_opsin"/>
    <property type="match status" value="1"/>
</dbReference>
<dbReference type="FunFam" id="1.20.1070.10:FF:000018">
    <property type="entry name" value="Rhodopsin"/>
    <property type="match status" value="1"/>
</dbReference>
<dbReference type="Gene3D" id="1.20.1070.10">
    <property type="entry name" value="Rhodopsin 7-helix transmembrane proteins"/>
    <property type="match status" value="1"/>
</dbReference>
<dbReference type="InterPro" id="IPR050125">
    <property type="entry name" value="GPCR_opsins"/>
</dbReference>
<dbReference type="InterPro" id="IPR000276">
    <property type="entry name" value="GPCR_Rhodpsn"/>
</dbReference>
<dbReference type="InterPro" id="IPR017452">
    <property type="entry name" value="GPCR_Rhodpsn_7TM"/>
</dbReference>
<dbReference type="InterPro" id="IPR001760">
    <property type="entry name" value="Opsin"/>
</dbReference>
<dbReference type="InterPro" id="IPR001521">
    <property type="entry name" value="Opsin_blue"/>
</dbReference>
<dbReference type="InterPro" id="IPR027430">
    <property type="entry name" value="Retinal_BS"/>
</dbReference>
<dbReference type="PANTHER" id="PTHR24240">
    <property type="entry name" value="OPSIN"/>
    <property type="match status" value="1"/>
</dbReference>
<dbReference type="Pfam" id="PF00001">
    <property type="entry name" value="7tm_1"/>
    <property type="match status" value="1"/>
</dbReference>
<dbReference type="PRINTS" id="PR00237">
    <property type="entry name" value="GPCRRHODOPSN"/>
</dbReference>
<dbReference type="PRINTS" id="PR00238">
    <property type="entry name" value="OPSIN"/>
</dbReference>
<dbReference type="PRINTS" id="PR00574">
    <property type="entry name" value="OPSINBLUE"/>
</dbReference>
<dbReference type="SUPFAM" id="SSF81321">
    <property type="entry name" value="Family A G protein-coupled receptor-like"/>
    <property type="match status" value="1"/>
</dbReference>
<dbReference type="PROSITE" id="PS00237">
    <property type="entry name" value="G_PROTEIN_RECEP_F1_1"/>
    <property type="match status" value="1"/>
</dbReference>
<dbReference type="PROSITE" id="PS50262">
    <property type="entry name" value="G_PROTEIN_RECEP_F1_2"/>
    <property type="match status" value="1"/>
</dbReference>
<dbReference type="PROSITE" id="PS00238">
    <property type="entry name" value="OPSIN"/>
    <property type="match status" value="1"/>
</dbReference>